<sequence length="412" mass="45788">MNNCRQNLENFDPEVFGYLNDEIKRQEEHIELIASENFVSKAVLETMGTELTNKYAEGYPGKRYYGGCEHVDKIEQLAIDRLKKLFNADHANVQPHCGANANIAVYVAVLKPGDTVLGMRLTEGGHLTHGSPVNMSGKFYNFVDYGVDPETGTIDYENVRELALKHKPKLIVAGASAYPRIIDFKKFREIADEVGAYLMVDMAHIAGLVATGDHPSPVPYADFVTTTTHKTLRGPRGGAILCKEEHKKLLDKSVFPGFQGGPLEHIIAAKAVCFKEDLQPEFKEYTHQILKNAKAMEKVFLDNDVRLVSGGTDNHLLLIDCRSFGMTGKEAENVLSEVNITTNKNTIPNDPETPFVTSGIRIGTPAITTRGLKEAEATKVAEFMIDALKKRRPAEEIKNDVVELMKQFPINR</sequence>
<organism>
    <name type="scientific">Finegoldia magna (strain ATCC 29328 / DSM 20472 / WAL 2508)</name>
    <name type="common">Peptostreptococcus magnus</name>
    <dbReference type="NCBI Taxonomy" id="334413"/>
    <lineage>
        <taxon>Bacteria</taxon>
        <taxon>Bacillati</taxon>
        <taxon>Bacillota</taxon>
        <taxon>Tissierellia</taxon>
        <taxon>Tissierellales</taxon>
        <taxon>Peptoniphilaceae</taxon>
        <taxon>Finegoldia</taxon>
    </lineage>
</organism>
<proteinExistence type="inferred from homology"/>
<reference key="1">
    <citation type="journal article" date="2008" name="DNA Res.">
        <title>Complete genome sequence of Finegoldia magna, an anaerobic opportunistic pathogen.</title>
        <authorList>
            <person name="Goto T."/>
            <person name="Yamashita A."/>
            <person name="Hirakawa H."/>
            <person name="Matsutani M."/>
            <person name="Todo K."/>
            <person name="Ohshima K."/>
            <person name="Toh H."/>
            <person name="Miyamoto K."/>
            <person name="Kuhara S."/>
            <person name="Hattori M."/>
            <person name="Shimizu T."/>
            <person name="Akimoto S."/>
        </authorList>
    </citation>
    <scope>NUCLEOTIDE SEQUENCE [LARGE SCALE GENOMIC DNA]</scope>
    <source>
        <strain>ATCC 29328 / DSM 20472 / WAL 2508</strain>
    </source>
</reference>
<accession>B0S1N3</accession>
<protein>
    <recommendedName>
        <fullName evidence="1">Serine hydroxymethyltransferase</fullName>
        <shortName evidence="1">SHMT</shortName>
        <shortName evidence="1">Serine methylase</shortName>
        <ecNumber evidence="1">2.1.2.1</ecNumber>
    </recommendedName>
</protein>
<keyword id="KW-0028">Amino-acid biosynthesis</keyword>
<keyword id="KW-0963">Cytoplasm</keyword>
<keyword id="KW-0554">One-carbon metabolism</keyword>
<keyword id="KW-0663">Pyridoxal phosphate</keyword>
<keyword id="KW-1185">Reference proteome</keyword>
<keyword id="KW-0808">Transferase</keyword>
<dbReference type="EC" id="2.1.2.1" evidence="1"/>
<dbReference type="EMBL" id="AP008971">
    <property type="protein sequence ID" value="BAG08273.1"/>
    <property type="molecule type" value="Genomic_DNA"/>
</dbReference>
<dbReference type="RefSeq" id="WP_012290667.1">
    <property type="nucleotide sequence ID" value="NC_010376.1"/>
</dbReference>
<dbReference type="SMR" id="B0S1N3"/>
<dbReference type="STRING" id="334413.FMG_0855"/>
<dbReference type="KEGG" id="fma:FMG_0855"/>
<dbReference type="eggNOG" id="COG0112">
    <property type="taxonomic scope" value="Bacteria"/>
</dbReference>
<dbReference type="HOGENOM" id="CLU_022477_2_1_9"/>
<dbReference type="UniPathway" id="UPA00193"/>
<dbReference type="UniPathway" id="UPA00288">
    <property type="reaction ID" value="UER01023"/>
</dbReference>
<dbReference type="Proteomes" id="UP000001319">
    <property type="component" value="Chromosome"/>
</dbReference>
<dbReference type="GO" id="GO:0005829">
    <property type="term" value="C:cytosol"/>
    <property type="evidence" value="ECO:0007669"/>
    <property type="project" value="TreeGrafter"/>
</dbReference>
<dbReference type="GO" id="GO:0004372">
    <property type="term" value="F:glycine hydroxymethyltransferase activity"/>
    <property type="evidence" value="ECO:0007669"/>
    <property type="project" value="UniProtKB-UniRule"/>
</dbReference>
<dbReference type="GO" id="GO:0030170">
    <property type="term" value="F:pyridoxal phosphate binding"/>
    <property type="evidence" value="ECO:0007669"/>
    <property type="project" value="UniProtKB-UniRule"/>
</dbReference>
<dbReference type="GO" id="GO:0019264">
    <property type="term" value="P:glycine biosynthetic process from serine"/>
    <property type="evidence" value="ECO:0007669"/>
    <property type="project" value="UniProtKB-UniRule"/>
</dbReference>
<dbReference type="GO" id="GO:0035999">
    <property type="term" value="P:tetrahydrofolate interconversion"/>
    <property type="evidence" value="ECO:0007669"/>
    <property type="project" value="UniProtKB-UniRule"/>
</dbReference>
<dbReference type="CDD" id="cd00378">
    <property type="entry name" value="SHMT"/>
    <property type="match status" value="1"/>
</dbReference>
<dbReference type="FunFam" id="3.40.640.10:FF:000001">
    <property type="entry name" value="Serine hydroxymethyltransferase"/>
    <property type="match status" value="1"/>
</dbReference>
<dbReference type="Gene3D" id="3.90.1150.10">
    <property type="entry name" value="Aspartate Aminotransferase, domain 1"/>
    <property type="match status" value="1"/>
</dbReference>
<dbReference type="Gene3D" id="3.40.640.10">
    <property type="entry name" value="Type I PLP-dependent aspartate aminotransferase-like (Major domain)"/>
    <property type="match status" value="1"/>
</dbReference>
<dbReference type="HAMAP" id="MF_00051">
    <property type="entry name" value="SHMT"/>
    <property type="match status" value="1"/>
</dbReference>
<dbReference type="InterPro" id="IPR015424">
    <property type="entry name" value="PyrdxlP-dep_Trfase"/>
</dbReference>
<dbReference type="InterPro" id="IPR015421">
    <property type="entry name" value="PyrdxlP-dep_Trfase_major"/>
</dbReference>
<dbReference type="InterPro" id="IPR015422">
    <property type="entry name" value="PyrdxlP-dep_Trfase_small"/>
</dbReference>
<dbReference type="InterPro" id="IPR001085">
    <property type="entry name" value="Ser_HO-MeTrfase"/>
</dbReference>
<dbReference type="InterPro" id="IPR049943">
    <property type="entry name" value="Ser_HO-MeTrfase-like"/>
</dbReference>
<dbReference type="InterPro" id="IPR019798">
    <property type="entry name" value="Ser_HO-MeTrfase_PLP_BS"/>
</dbReference>
<dbReference type="InterPro" id="IPR039429">
    <property type="entry name" value="SHMT-like_dom"/>
</dbReference>
<dbReference type="NCBIfam" id="NF000586">
    <property type="entry name" value="PRK00011.1"/>
    <property type="match status" value="1"/>
</dbReference>
<dbReference type="PANTHER" id="PTHR11680">
    <property type="entry name" value="SERINE HYDROXYMETHYLTRANSFERASE"/>
    <property type="match status" value="1"/>
</dbReference>
<dbReference type="PANTHER" id="PTHR11680:SF35">
    <property type="entry name" value="SERINE HYDROXYMETHYLTRANSFERASE 1"/>
    <property type="match status" value="1"/>
</dbReference>
<dbReference type="Pfam" id="PF00464">
    <property type="entry name" value="SHMT"/>
    <property type="match status" value="1"/>
</dbReference>
<dbReference type="PIRSF" id="PIRSF000412">
    <property type="entry name" value="SHMT"/>
    <property type="match status" value="1"/>
</dbReference>
<dbReference type="SUPFAM" id="SSF53383">
    <property type="entry name" value="PLP-dependent transferases"/>
    <property type="match status" value="1"/>
</dbReference>
<dbReference type="PROSITE" id="PS00096">
    <property type="entry name" value="SHMT"/>
    <property type="match status" value="1"/>
</dbReference>
<feature type="chain" id="PRO_0000369925" description="Serine hydroxymethyltransferase">
    <location>
        <begin position="1"/>
        <end position="412"/>
    </location>
</feature>
<feature type="binding site" evidence="1">
    <location>
        <position position="121"/>
    </location>
    <ligand>
        <name>(6S)-5,6,7,8-tetrahydrofolate</name>
        <dbReference type="ChEBI" id="CHEBI:57453"/>
    </ligand>
</feature>
<feature type="binding site" evidence="1">
    <location>
        <begin position="125"/>
        <end position="127"/>
    </location>
    <ligand>
        <name>(6S)-5,6,7,8-tetrahydrofolate</name>
        <dbReference type="ChEBI" id="CHEBI:57453"/>
    </ligand>
</feature>
<feature type="binding site" evidence="1">
    <location>
        <begin position="353"/>
        <end position="355"/>
    </location>
    <ligand>
        <name>(6S)-5,6,7,8-tetrahydrofolate</name>
        <dbReference type="ChEBI" id="CHEBI:57453"/>
    </ligand>
</feature>
<feature type="site" description="Plays an important role in substrate specificity" evidence="1">
    <location>
        <position position="229"/>
    </location>
</feature>
<feature type="modified residue" description="N6-(pyridoxal phosphate)lysine" evidence="1">
    <location>
        <position position="230"/>
    </location>
</feature>
<comment type="function">
    <text evidence="1">Catalyzes the reversible interconversion of serine and glycine with tetrahydrofolate (THF) serving as the one-carbon carrier. This reaction serves as the major source of one-carbon groups required for the biosynthesis of purines, thymidylate, methionine, and other important biomolecules. Also exhibits THF-independent aldolase activity toward beta-hydroxyamino acids, producing glycine and aldehydes, via a retro-aldol mechanism.</text>
</comment>
<comment type="catalytic activity">
    <reaction evidence="1">
        <text>(6R)-5,10-methylene-5,6,7,8-tetrahydrofolate + glycine + H2O = (6S)-5,6,7,8-tetrahydrofolate + L-serine</text>
        <dbReference type="Rhea" id="RHEA:15481"/>
        <dbReference type="ChEBI" id="CHEBI:15377"/>
        <dbReference type="ChEBI" id="CHEBI:15636"/>
        <dbReference type="ChEBI" id="CHEBI:33384"/>
        <dbReference type="ChEBI" id="CHEBI:57305"/>
        <dbReference type="ChEBI" id="CHEBI:57453"/>
        <dbReference type="EC" id="2.1.2.1"/>
    </reaction>
</comment>
<comment type="cofactor">
    <cofactor evidence="1">
        <name>pyridoxal 5'-phosphate</name>
        <dbReference type="ChEBI" id="CHEBI:597326"/>
    </cofactor>
</comment>
<comment type="pathway">
    <text evidence="1">One-carbon metabolism; tetrahydrofolate interconversion.</text>
</comment>
<comment type="pathway">
    <text evidence="1">Amino-acid biosynthesis; glycine biosynthesis; glycine from L-serine: step 1/1.</text>
</comment>
<comment type="subunit">
    <text evidence="1">Homodimer.</text>
</comment>
<comment type="subcellular location">
    <subcellularLocation>
        <location evidence="1">Cytoplasm</location>
    </subcellularLocation>
</comment>
<comment type="similarity">
    <text evidence="1">Belongs to the SHMT family.</text>
</comment>
<evidence type="ECO:0000255" key="1">
    <source>
        <dbReference type="HAMAP-Rule" id="MF_00051"/>
    </source>
</evidence>
<gene>
    <name evidence="1" type="primary">glyA</name>
    <name type="ordered locus">FMG_0855</name>
</gene>
<name>GLYA_FINM2</name>